<proteinExistence type="evidence at protein level"/>
<gene>
    <name type="primary">radA</name>
    <name type="ordered locus">SSO0250</name>
</gene>
<evidence type="ECO:0000255" key="1"/>
<evidence type="ECO:0000305" key="2"/>
<evidence type="ECO:0007829" key="3">
    <source>
        <dbReference type="PDB" id="2DFL"/>
    </source>
</evidence>
<evidence type="ECO:0007829" key="4">
    <source>
        <dbReference type="PDB" id="2Z43"/>
    </source>
</evidence>
<comment type="function">
    <text>Involved in DNA repair and in homologous recombination. Binds and assemble on single-stranded DNA to form a nucleoprotein filament. Hydrolyzes ATP in a ssDNA-dependent manner and promotes DNA strand exchange between homologous DNA molecules.</text>
</comment>
<comment type="similarity">
    <text evidence="2">Belongs to the eukaryotic RecA-like protein family.</text>
</comment>
<organism>
    <name type="scientific">Saccharolobus solfataricus (strain ATCC 35092 / DSM 1617 / JCM 11322 / P2)</name>
    <name type="common">Sulfolobus solfataricus</name>
    <dbReference type="NCBI Taxonomy" id="273057"/>
    <lineage>
        <taxon>Archaea</taxon>
        <taxon>Thermoproteota</taxon>
        <taxon>Thermoprotei</taxon>
        <taxon>Sulfolobales</taxon>
        <taxon>Sulfolobaceae</taxon>
        <taxon>Saccharolobus</taxon>
    </lineage>
</organism>
<sequence length="324" mass="35867">MSNEVEQKKNIKTINDLPGISQTVINKLIEAGYSSLETLAVASPQDLSVAAGIPLSTAQKIIKEARDALDIRFKTALEVKKERMNVKKISTGSQALDGLLAGGIETRTMTEFFGEFGSGKTQLCHQLSVNVQLPPEKGGLSGKAVYIDTEGTFRWERIENMAKALGLDIDNVMNNIYYIRAINTDHQIAIVDDLQELVSKDPSIKLIVVDSVTSHFRAEYPGRENLAVRQQKLNKHLHQLTRLAEVYDIAVIITNQVMARPDMFYGDPTVAVGGHTLYHVPGIRIQLKKSRGNRRIARVVDAPHLPEGEVVFALTEEGIRDAEE</sequence>
<reference key="1">
    <citation type="journal article" date="1996" name="Nucleic Acids Res.">
        <title>recA-like genes from three archaean species with putative protein products similar to Rad51 and Dmc1 proteins of the yeast Saccharomyces cerevisiae.</title>
        <authorList>
            <person name="Sandler S.J."/>
            <person name="Satin L.H."/>
            <person name="Samra H.S."/>
            <person name="Clark A.J."/>
        </authorList>
    </citation>
    <scope>NUCLEOTIDE SEQUENCE [GENOMIC DNA]</scope>
</reference>
<reference key="2">
    <citation type="journal article" date="2001" name="Proc. Natl. Acad. Sci. U.S.A.">
        <title>The complete genome of the crenarchaeon Sulfolobus solfataricus P2.</title>
        <authorList>
            <person name="She Q."/>
            <person name="Singh R.K."/>
            <person name="Confalonieri F."/>
            <person name="Zivanovic Y."/>
            <person name="Allard G."/>
            <person name="Awayez M.J."/>
            <person name="Chan-Weiher C.C.-Y."/>
            <person name="Clausen I.G."/>
            <person name="Curtis B.A."/>
            <person name="De Moors A."/>
            <person name="Erauso G."/>
            <person name="Fletcher C."/>
            <person name="Gordon P.M.K."/>
            <person name="Heikamp-de Jong I."/>
            <person name="Jeffries A.C."/>
            <person name="Kozera C.J."/>
            <person name="Medina N."/>
            <person name="Peng X."/>
            <person name="Thi-Ngoc H.P."/>
            <person name="Redder P."/>
            <person name="Schenk M.E."/>
            <person name="Theriault C."/>
            <person name="Tolstrup N."/>
            <person name="Charlebois R.L."/>
            <person name="Doolittle W.F."/>
            <person name="Duguet M."/>
            <person name="Gaasterland T."/>
            <person name="Garrett R.A."/>
            <person name="Ragan M.A."/>
            <person name="Sensen C.W."/>
            <person name="Van der Oost J."/>
        </authorList>
    </citation>
    <scope>NUCLEOTIDE SEQUENCE [LARGE SCALE GENOMIC DNA]</scope>
    <source>
        <strain>ATCC 35092 / DSM 1617 / JCM 11322 / P2</strain>
    </source>
</reference>
<reference key="3">
    <citation type="journal article" date="1998" name="Genes Dev.">
        <title>RadA protein is an archaeal RecA protein homolog that catalyzes DNA strand exchange.</title>
        <authorList>
            <person name="Seitz E.M."/>
            <person name="Brockman J.P."/>
            <person name="Sandler S.J."/>
            <person name="Clark A.J."/>
            <person name="Kowalczykowski S.C."/>
        </authorList>
    </citation>
    <scope>CHARACTERIZATION</scope>
</reference>
<reference key="4">
    <citation type="journal article" date="2000" name="Mol. Microbiol.">
        <title>The DNA binding and pairing preferences of the archaeal RadA protein demonstrate a universal characteristic of DNA strand exchange proteins.</title>
        <authorList>
            <person name="Seitz E.M."/>
            <person name="Kowalczykowski S.C."/>
        </authorList>
    </citation>
    <scope>CHARACTERIZATION</scope>
</reference>
<protein>
    <recommendedName>
        <fullName>DNA repair and recombination protein RadA</fullName>
    </recommendedName>
</protein>
<feature type="chain" id="PRO_0000150107" description="DNA repair and recombination protein RadA">
    <location>
        <begin position="1"/>
        <end position="324"/>
    </location>
</feature>
<feature type="binding site" evidence="1">
    <location>
        <begin position="114"/>
        <end position="121"/>
    </location>
    <ligand>
        <name>ATP</name>
        <dbReference type="ChEBI" id="CHEBI:30616"/>
    </ligand>
</feature>
<feature type="sequence conflict" description="In Ref. 1; AAC44123." evidence="2" ref="1">
    <original>N</original>
    <variation>I</variation>
    <location>
        <position position="225"/>
    </location>
</feature>
<feature type="helix" evidence="4">
    <location>
        <begin position="14"/>
        <end position="16"/>
    </location>
</feature>
<feature type="strand" evidence="4">
    <location>
        <begin position="17"/>
        <end position="19"/>
    </location>
</feature>
<feature type="helix" evidence="4">
    <location>
        <begin position="22"/>
        <end position="29"/>
    </location>
</feature>
<feature type="turn" evidence="4">
    <location>
        <begin position="30"/>
        <end position="32"/>
    </location>
</feature>
<feature type="helix" evidence="4">
    <location>
        <begin position="36"/>
        <end position="40"/>
    </location>
</feature>
<feature type="helix" evidence="4">
    <location>
        <begin position="44"/>
        <end position="51"/>
    </location>
</feature>
<feature type="helix" evidence="4">
    <location>
        <begin position="55"/>
        <end position="68"/>
    </location>
</feature>
<feature type="helix" evidence="4">
    <location>
        <begin position="76"/>
        <end position="83"/>
    </location>
</feature>
<feature type="helix" evidence="4">
    <location>
        <begin position="94"/>
        <end position="99"/>
    </location>
</feature>
<feature type="turn" evidence="4">
    <location>
        <begin position="100"/>
        <end position="102"/>
    </location>
</feature>
<feature type="strand" evidence="4">
    <location>
        <begin position="103"/>
        <end position="105"/>
    </location>
</feature>
<feature type="strand" evidence="4">
    <location>
        <begin position="108"/>
        <end position="115"/>
    </location>
</feature>
<feature type="helix" evidence="4">
    <location>
        <begin position="120"/>
        <end position="130"/>
    </location>
</feature>
<feature type="strand" evidence="3">
    <location>
        <begin position="131"/>
        <end position="133"/>
    </location>
</feature>
<feature type="helix" evidence="4">
    <location>
        <begin position="135"/>
        <end position="137"/>
    </location>
</feature>
<feature type="strand" evidence="4">
    <location>
        <begin position="143"/>
        <end position="151"/>
    </location>
</feature>
<feature type="helix" evidence="4">
    <location>
        <begin position="155"/>
        <end position="164"/>
    </location>
</feature>
<feature type="helix" evidence="4">
    <location>
        <begin position="169"/>
        <end position="174"/>
    </location>
</feature>
<feature type="strand" evidence="4">
    <location>
        <begin position="176"/>
        <end position="180"/>
    </location>
</feature>
<feature type="helix" evidence="4">
    <location>
        <begin position="184"/>
        <end position="200"/>
    </location>
</feature>
<feature type="strand" evidence="4">
    <location>
        <begin position="204"/>
        <end position="209"/>
    </location>
</feature>
<feature type="turn" evidence="4">
    <location>
        <begin position="210"/>
        <end position="213"/>
    </location>
</feature>
<feature type="helix" evidence="4">
    <location>
        <begin position="214"/>
        <end position="219"/>
    </location>
</feature>
<feature type="turn" evidence="4">
    <location>
        <begin position="222"/>
        <end position="224"/>
    </location>
</feature>
<feature type="helix" evidence="4">
    <location>
        <begin position="226"/>
        <end position="247"/>
    </location>
</feature>
<feature type="strand" evidence="4">
    <location>
        <begin position="250"/>
        <end position="256"/>
    </location>
</feature>
<feature type="strand" evidence="4">
    <location>
        <begin position="283"/>
        <end position="289"/>
    </location>
</feature>
<feature type="strand" evidence="4">
    <location>
        <begin position="294"/>
        <end position="301"/>
    </location>
</feature>
<feature type="strand" evidence="4">
    <location>
        <begin position="303"/>
        <end position="305"/>
    </location>
</feature>
<feature type="strand" evidence="4">
    <location>
        <begin position="308"/>
        <end position="315"/>
    </location>
</feature>
<feature type="strand" evidence="4">
    <location>
        <begin position="318"/>
        <end position="320"/>
    </location>
</feature>
<name>RADA_SACS2</name>
<accession>Q55075</accession>
<dbReference type="EMBL" id="U45310">
    <property type="protein sequence ID" value="AAC44123.1"/>
    <property type="molecule type" value="Genomic_DNA"/>
</dbReference>
<dbReference type="EMBL" id="AE006641">
    <property type="protein sequence ID" value="AAK40589.1"/>
    <property type="molecule type" value="Genomic_DNA"/>
</dbReference>
<dbReference type="PIR" id="F90166">
    <property type="entry name" value="F90166"/>
</dbReference>
<dbReference type="PIR" id="S71093">
    <property type="entry name" value="S71093"/>
</dbReference>
<dbReference type="RefSeq" id="WP_009990512.1">
    <property type="nucleotide sequence ID" value="NC_002754.1"/>
</dbReference>
<dbReference type="PDB" id="2BKE">
    <property type="method" value="X-ray"/>
    <property type="resolution" value="3.20 A"/>
    <property type="chains" value="A=1-324"/>
</dbReference>
<dbReference type="PDB" id="2DFL">
    <property type="method" value="X-ray"/>
    <property type="resolution" value="2.90 A"/>
    <property type="chains" value="A=1-324"/>
</dbReference>
<dbReference type="PDB" id="2Z43">
    <property type="method" value="X-ray"/>
    <property type="resolution" value="1.93 A"/>
    <property type="chains" value="A/B/C=1-324"/>
</dbReference>
<dbReference type="PDB" id="2ZUB">
    <property type="method" value="X-ray"/>
    <property type="resolution" value="2.90 A"/>
    <property type="chains" value="A/B=1-324"/>
</dbReference>
<dbReference type="PDB" id="2ZUC">
    <property type="method" value="X-ray"/>
    <property type="resolution" value="3.30 A"/>
    <property type="chains" value="A/B=1-324"/>
</dbReference>
<dbReference type="PDB" id="2ZUD">
    <property type="method" value="X-ray"/>
    <property type="resolution" value="3.20 A"/>
    <property type="chains" value="A/B=1-324"/>
</dbReference>
<dbReference type="PDBsum" id="2BKE"/>
<dbReference type="PDBsum" id="2DFL"/>
<dbReference type="PDBsum" id="2Z43"/>
<dbReference type="PDBsum" id="2ZUB"/>
<dbReference type="PDBsum" id="2ZUC"/>
<dbReference type="PDBsum" id="2ZUD"/>
<dbReference type="SMR" id="Q55075"/>
<dbReference type="FunCoup" id="Q55075">
    <property type="interactions" value="168"/>
</dbReference>
<dbReference type="STRING" id="273057.SSO0250"/>
<dbReference type="PaxDb" id="273057-SSO0250"/>
<dbReference type="EnsemblBacteria" id="AAK40589">
    <property type="protein sequence ID" value="AAK40589"/>
    <property type="gene ID" value="SSO0250"/>
</dbReference>
<dbReference type="GeneID" id="44129219"/>
<dbReference type="KEGG" id="sso:SSO0250"/>
<dbReference type="PATRIC" id="fig|273057.12.peg.244"/>
<dbReference type="eggNOG" id="arCOG00415">
    <property type="taxonomic scope" value="Archaea"/>
</dbReference>
<dbReference type="HOGENOM" id="CLU_041732_0_0_2"/>
<dbReference type="InParanoid" id="Q55075"/>
<dbReference type="PhylomeDB" id="Q55075"/>
<dbReference type="BRENDA" id="3.6.4.B7">
    <property type="organism ID" value="6163"/>
</dbReference>
<dbReference type="EvolutionaryTrace" id="Q55075"/>
<dbReference type="Proteomes" id="UP000001974">
    <property type="component" value="Chromosome"/>
</dbReference>
<dbReference type="GO" id="GO:0005524">
    <property type="term" value="F:ATP binding"/>
    <property type="evidence" value="ECO:0007669"/>
    <property type="project" value="UniProtKB-UniRule"/>
</dbReference>
<dbReference type="GO" id="GO:0016887">
    <property type="term" value="F:ATP hydrolysis activity"/>
    <property type="evidence" value="ECO:0007669"/>
    <property type="project" value="InterPro"/>
</dbReference>
<dbReference type="GO" id="GO:0140664">
    <property type="term" value="F:ATP-dependent DNA damage sensor activity"/>
    <property type="evidence" value="ECO:0007669"/>
    <property type="project" value="InterPro"/>
</dbReference>
<dbReference type="GO" id="GO:0003684">
    <property type="term" value="F:damaged DNA binding"/>
    <property type="evidence" value="ECO:0007669"/>
    <property type="project" value="UniProtKB-UniRule"/>
</dbReference>
<dbReference type="GO" id="GO:0006310">
    <property type="term" value="P:DNA recombination"/>
    <property type="evidence" value="ECO:0007669"/>
    <property type="project" value="UniProtKB-UniRule"/>
</dbReference>
<dbReference type="GO" id="GO:0006281">
    <property type="term" value="P:DNA repair"/>
    <property type="evidence" value="ECO:0007669"/>
    <property type="project" value="UniProtKB-UniRule"/>
</dbReference>
<dbReference type="CDD" id="cd19515">
    <property type="entry name" value="archRadA"/>
    <property type="match status" value="1"/>
</dbReference>
<dbReference type="FunFam" id="3.40.50.300:FF:002052">
    <property type="entry name" value="DNA repair protein RAD51 homolog"/>
    <property type="match status" value="1"/>
</dbReference>
<dbReference type="Gene3D" id="1.10.150.20">
    <property type="entry name" value="5' to 3' exonuclease, C-terminal subdomain"/>
    <property type="match status" value="1"/>
</dbReference>
<dbReference type="Gene3D" id="3.40.50.300">
    <property type="entry name" value="P-loop containing nucleotide triphosphate hydrolases"/>
    <property type="match status" value="1"/>
</dbReference>
<dbReference type="HAMAP" id="MF_00348">
    <property type="entry name" value="RadA_arch"/>
    <property type="match status" value="1"/>
</dbReference>
<dbReference type="InterPro" id="IPR003593">
    <property type="entry name" value="AAA+_ATPase"/>
</dbReference>
<dbReference type="InterPro" id="IPR013632">
    <property type="entry name" value="DNA_recomb/repair_Rad51_C"/>
</dbReference>
<dbReference type="InterPro" id="IPR011938">
    <property type="entry name" value="DNA_recomb/repair_RadA"/>
</dbReference>
<dbReference type="InterPro" id="IPR016467">
    <property type="entry name" value="DNA_recomb/repair_RecA-like"/>
</dbReference>
<dbReference type="InterPro" id="IPR010995">
    <property type="entry name" value="DNA_repair_Rad51/TF_NusA_a-hlx"/>
</dbReference>
<dbReference type="InterPro" id="IPR027417">
    <property type="entry name" value="P-loop_NTPase"/>
</dbReference>
<dbReference type="InterPro" id="IPR020588">
    <property type="entry name" value="RecA_ATP-bd"/>
</dbReference>
<dbReference type="InterPro" id="IPR020587">
    <property type="entry name" value="RecA_monomer-monomer_interface"/>
</dbReference>
<dbReference type="NCBIfam" id="NF003301">
    <property type="entry name" value="PRK04301.1"/>
    <property type="match status" value="1"/>
</dbReference>
<dbReference type="NCBIfam" id="TIGR02236">
    <property type="entry name" value="recomb_radA"/>
    <property type="match status" value="1"/>
</dbReference>
<dbReference type="PANTHER" id="PTHR22942:SF30">
    <property type="entry name" value="MEIOTIC RECOMBINATION PROTEIN DMC1_LIM15 HOMOLOG"/>
    <property type="match status" value="1"/>
</dbReference>
<dbReference type="PANTHER" id="PTHR22942">
    <property type="entry name" value="RECA/RAD51/RADA DNA STRAND-PAIRING FAMILY MEMBER"/>
    <property type="match status" value="1"/>
</dbReference>
<dbReference type="Pfam" id="PF14520">
    <property type="entry name" value="HHH_5"/>
    <property type="match status" value="1"/>
</dbReference>
<dbReference type="Pfam" id="PF08423">
    <property type="entry name" value="Rad51"/>
    <property type="match status" value="1"/>
</dbReference>
<dbReference type="PIRSF" id="PIRSF005856">
    <property type="entry name" value="Rad51"/>
    <property type="match status" value="1"/>
</dbReference>
<dbReference type="SMART" id="SM00382">
    <property type="entry name" value="AAA"/>
    <property type="match status" value="1"/>
</dbReference>
<dbReference type="SUPFAM" id="SSF52540">
    <property type="entry name" value="P-loop containing nucleoside triphosphate hydrolases"/>
    <property type="match status" value="1"/>
</dbReference>
<dbReference type="SUPFAM" id="SSF47794">
    <property type="entry name" value="Rad51 N-terminal domain-like"/>
    <property type="match status" value="1"/>
</dbReference>
<dbReference type="PROSITE" id="PS50162">
    <property type="entry name" value="RECA_2"/>
    <property type="match status" value="1"/>
</dbReference>
<dbReference type="PROSITE" id="PS50163">
    <property type="entry name" value="RECA_3"/>
    <property type="match status" value="1"/>
</dbReference>
<keyword id="KW-0002">3D-structure</keyword>
<keyword id="KW-0067">ATP-binding</keyword>
<keyword id="KW-0227">DNA damage</keyword>
<keyword id="KW-0233">DNA recombination</keyword>
<keyword id="KW-0238">DNA-binding</keyword>
<keyword id="KW-0547">Nucleotide-binding</keyword>
<keyword id="KW-1185">Reference proteome</keyword>